<name>MKAR_MYCMD</name>
<sequence length="350" mass="37725">MAIEQHIDGLLRHVGLRVDHGLTPVSASLVLLAGIGALSVGTFALRLVRLFADVYILPGNSVSKYGANKKDLTRASWAVVTGATDGIGREFALQLARKGFNIVLVSRSPEKLGSVAAEIEAATPGVRTKTQAIDFALGDERQYEGLEHTVKGLNVGVLVNNVGKSHNMPVTFTETSEEEMEDIIEINVVSVLRVSKMIIPGMVDRKRGLVLNLGSFAGQVTTPMLATYAGSKAFLSGWSQALGEEVKRSNVDVSLLNTYFVVSNLSKIRKSSAMIPTPKQYVTQVLKTLGRNGGAVGRPYTATPWPGHALVDWATTFVLPRGWLLSYTYGQQVATRKRALNKAHKAVKSA</sequence>
<dbReference type="EC" id="1.1.1.330" evidence="4"/>
<dbReference type="EMBL" id="CM003153">
    <property type="protein sequence ID" value="KIS67339.1"/>
    <property type="molecule type" value="Genomic_DNA"/>
</dbReference>
<dbReference type="RefSeq" id="XP_011391124.1">
    <property type="nucleotide sequence ID" value="XM_011392822.1"/>
</dbReference>
<dbReference type="SMR" id="Q4P622"/>
<dbReference type="FunCoup" id="Q4P622">
    <property type="interactions" value="374"/>
</dbReference>
<dbReference type="STRING" id="237631.Q4P622"/>
<dbReference type="EnsemblFungi" id="KIS67339">
    <property type="protein sequence ID" value="KIS67339"/>
    <property type="gene ID" value="UMAG_04441"/>
</dbReference>
<dbReference type="GeneID" id="23564623"/>
<dbReference type="KEGG" id="uma:UMAG_04441"/>
<dbReference type="VEuPathDB" id="FungiDB:UMAG_04441"/>
<dbReference type="eggNOG" id="KOG1014">
    <property type="taxonomic scope" value="Eukaryota"/>
</dbReference>
<dbReference type="HOGENOM" id="CLU_010194_38_0_1"/>
<dbReference type="InParanoid" id="Q4P622"/>
<dbReference type="OMA" id="LVAPGMM"/>
<dbReference type="OrthoDB" id="5545019at2759"/>
<dbReference type="UniPathway" id="UPA00094"/>
<dbReference type="Proteomes" id="UP000000561">
    <property type="component" value="Chromosome 14"/>
</dbReference>
<dbReference type="GO" id="GO:0005783">
    <property type="term" value="C:endoplasmic reticulum"/>
    <property type="evidence" value="ECO:0000318"/>
    <property type="project" value="GO_Central"/>
</dbReference>
<dbReference type="GO" id="GO:0005789">
    <property type="term" value="C:endoplasmic reticulum membrane"/>
    <property type="evidence" value="ECO:0007669"/>
    <property type="project" value="UniProtKB-SubCell"/>
</dbReference>
<dbReference type="GO" id="GO:0045703">
    <property type="term" value="F:ketoreductase activity"/>
    <property type="evidence" value="ECO:0007669"/>
    <property type="project" value="UniProtKB-UniRule"/>
</dbReference>
<dbReference type="GO" id="GO:0141040">
    <property type="term" value="F:very-long-chain 3-oxoacyl-CoA reductase activity"/>
    <property type="evidence" value="ECO:0007669"/>
    <property type="project" value="UniProtKB-EC"/>
</dbReference>
<dbReference type="GO" id="GO:0030497">
    <property type="term" value="P:fatty acid elongation"/>
    <property type="evidence" value="ECO:0000318"/>
    <property type="project" value="GO_Central"/>
</dbReference>
<dbReference type="GO" id="GO:0030148">
    <property type="term" value="P:sphingolipid biosynthetic process"/>
    <property type="evidence" value="ECO:0007669"/>
    <property type="project" value="EnsemblFungi"/>
</dbReference>
<dbReference type="GO" id="GO:0042761">
    <property type="term" value="P:very long-chain fatty acid biosynthetic process"/>
    <property type="evidence" value="ECO:0007669"/>
    <property type="project" value="EnsemblFungi"/>
</dbReference>
<dbReference type="CDD" id="cd05356">
    <property type="entry name" value="17beta-HSD1_like_SDR_c"/>
    <property type="match status" value="1"/>
</dbReference>
<dbReference type="FunFam" id="3.40.50.720:FF:000137">
    <property type="entry name" value="Hydroxysteroid (17-beta) dehydrogenase 3"/>
    <property type="match status" value="1"/>
</dbReference>
<dbReference type="Gene3D" id="3.40.50.720">
    <property type="entry name" value="NAD(P)-binding Rossmann-like Domain"/>
    <property type="match status" value="1"/>
</dbReference>
<dbReference type="HAMAP" id="MF_03107">
    <property type="entry name" value="3_ketoreductase"/>
    <property type="match status" value="1"/>
</dbReference>
<dbReference type="InterPro" id="IPR027533">
    <property type="entry name" value="3_ketoreductase_fungal"/>
</dbReference>
<dbReference type="InterPro" id="IPR036291">
    <property type="entry name" value="NAD(P)-bd_dom_sf"/>
</dbReference>
<dbReference type="InterPro" id="IPR020904">
    <property type="entry name" value="Sc_DH/Rdtase_CS"/>
</dbReference>
<dbReference type="InterPro" id="IPR002347">
    <property type="entry name" value="SDR_fam"/>
</dbReference>
<dbReference type="PANTHER" id="PTHR43086:SF2">
    <property type="entry name" value="HYDROXYSTEROID DEHYDROGENASE-LIKE PROTEIN 1"/>
    <property type="match status" value="1"/>
</dbReference>
<dbReference type="PANTHER" id="PTHR43086">
    <property type="entry name" value="VERY-LONG-CHAIN 3-OXOOACYL-COA REDUCTASE"/>
    <property type="match status" value="1"/>
</dbReference>
<dbReference type="Pfam" id="PF00106">
    <property type="entry name" value="adh_short"/>
    <property type="match status" value="1"/>
</dbReference>
<dbReference type="PIRSF" id="PIRSF000126">
    <property type="entry name" value="11-beta-HSD1"/>
    <property type="match status" value="1"/>
</dbReference>
<dbReference type="PRINTS" id="PR00081">
    <property type="entry name" value="GDHRDH"/>
</dbReference>
<dbReference type="SUPFAM" id="SSF51735">
    <property type="entry name" value="NAD(P)-binding Rossmann-fold domains"/>
    <property type="match status" value="1"/>
</dbReference>
<dbReference type="PROSITE" id="PS00061">
    <property type="entry name" value="ADH_SHORT"/>
    <property type="match status" value="1"/>
</dbReference>
<evidence type="ECO:0000250" key="1">
    <source>
        <dbReference type="UniProtKB" id="L0E2Z4"/>
    </source>
</evidence>
<evidence type="ECO:0000250" key="2">
    <source>
        <dbReference type="UniProtKB" id="O93868"/>
    </source>
</evidence>
<evidence type="ECO:0000250" key="3">
    <source>
        <dbReference type="UniProtKB" id="P38286"/>
    </source>
</evidence>
<evidence type="ECO:0000255" key="4">
    <source>
        <dbReference type="HAMAP-Rule" id="MF_03107"/>
    </source>
</evidence>
<organism>
    <name type="scientific">Mycosarcoma maydis</name>
    <name type="common">Corn smut fungus</name>
    <name type="synonym">Ustilago maydis</name>
    <dbReference type="NCBI Taxonomy" id="5270"/>
    <lineage>
        <taxon>Eukaryota</taxon>
        <taxon>Fungi</taxon>
        <taxon>Dikarya</taxon>
        <taxon>Basidiomycota</taxon>
        <taxon>Ustilaginomycotina</taxon>
        <taxon>Ustilaginomycetes</taxon>
        <taxon>Ustilaginales</taxon>
        <taxon>Ustilaginaceae</taxon>
        <taxon>Mycosarcoma</taxon>
    </lineage>
</organism>
<keyword id="KW-0256">Endoplasmic reticulum</keyword>
<keyword id="KW-0275">Fatty acid biosynthesis</keyword>
<keyword id="KW-0276">Fatty acid metabolism</keyword>
<keyword id="KW-0444">Lipid biosynthesis</keyword>
<keyword id="KW-0443">Lipid metabolism</keyword>
<keyword id="KW-0472">Membrane</keyword>
<keyword id="KW-0521">NADP</keyword>
<keyword id="KW-0560">Oxidoreductase</keyword>
<keyword id="KW-1185">Reference proteome</keyword>
<keyword id="KW-0812">Transmembrane</keyword>
<keyword id="KW-1133">Transmembrane helix</keyword>
<feature type="chain" id="PRO_0000357323" description="Very-long-chain 3-oxoacyl-CoA reductase">
    <location>
        <begin position="1"/>
        <end position="350"/>
    </location>
</feature>
<feature type="transmembrane region" description="Helical" evidence="4">
    <location>
        <begin position="28"/>
        <end position="48"/>
    </location>
</feature>
<feature type="active site" description="Proton donor" evidence="2">
    <location>
        <position position="228"/>
    </location>
</feature>
<feature type="active site" description="Lowers pKa of active site Tyr" evidence="2">
    <location>
        <position position="232"/>
    </location>
</feature>
<feature type="binding site" evidence="1">
    <location>
        <position position="79"/>
    </location>
    <ligand>
        <name>NADP(+)</name>
        <dbReference type="ChEBI" id="CHEBI:58349"/>
    </ligand>
</feature>
<feature type="binding site" evidence="1">
    <location>
        <position position="134"/>
    </location>
    <ligand>
        <name>NADP(+)</name>
        <dbReference type="ChEBI" id="CHEBI:58349"/>
    </ligand>
</feature>
<feature type="binding site" evidence="2">
    <location>
        <position position="161"/>
    </location>
    <ligand>
        <name>NADP(+)</name>
        <dbReference type="ChEBI" id="CHEBI:58349"/>
    </ligand>
</feature>
<feature type="binding site" evidence="1">
    <location>
        <position position="196"/>
    </location>
    <ligand>
        <name>NADP(+)</name>
        <dbReference type="ChEBI" id="CHEBI:58349"/>
    </ligand>
</feature>
<feature type="binding site" evidence="2">
    <location>
        <position position="228"/>
    </location>
    <ligand>
        <name>NADP(+)</name>
        <dbReference type="ChEBI" id="CHEBI:58349"/>
    </ligand>
</feature>
<feature type="binding site" evidence="2">
    <location>
        <position position="232"/>
    </location>
    <ligand>
        <name>NADP(+)</name>
        <dbReference type="ChEBI" id="CHEBI:58349"/>
    </ligand>
</feature>
<feature type="binding site" evidence="2">
    <location>
        <position position="261"/>
    </location>
    <ligand>
        <name>NADP(+)</name>
        <dbReference type="ChEBI" id="CHEBI:58349"/>
    </ligand>
</feature>
<feature type="binding site" evidence="1">
    <location>
        <position position="263"/>
    </location>
    <ligand>
        <name>NADP(+)</name>
        <dbReference type="ChEBI" id="CHEBI:58349"/>
    </ligand>
</feature>
<accession>Q4P622</accession>
<accession>A0A0D1DSL9</accession>
<reference key="1">
    <citation type="journal article" date="2006" name="Nature">
        <title>Insights from the genome of the biotrophic fungal plant pathogen Ustilago maydis.</title>
        <authorList>
            <person name="Kaemper J."/>
            <person name="Kahmann R."/>
            <person name="Boelker M."/>
            <person name="Ma L.-J."/>
            <person name="Brefort T."/>
            <person name="Saville B.J."/>
            <person name="Banuett F."/>
            <person name="Kronstad J.W."/>
            <person name="Gold S.E."/>
            <person name="Mueller O."/>
            <person name="Perlin M.H."/>
            <person name="Woesten H.A.B."/>
            <person name="de Vries R."/>
            <person name="Ruiz-Herrera J."/>
            <person name="Reynaga-Pena C.G."/>
            <person name="Snetselaar K."/>
            <person name="McCann M."/>
            <person name="Perez-Martin J."/>
            <person name="Feldbruegge M."/>
            <person name="Basse C.W."/>
            <person name="Steinberg G."/>
            <person name="Ibeas J.I."/>
            <person name="Holloman W."/>
            <person name="Guzman P."/>
            <person name="Farman M.L."/>
            <person name="Stajich J.E."/>
            <person name="Sentandreu R."/>
            <person name="Gonzalez-Prieto J.M."/>
            <person name="Kennell J.C."/>
            <person name="Molina L."/>
            <person name="Schirawski J."/>
            <person name="Mendoza-Mendoza A."/>
            <person name="Greilinger D."/>
            <person name="Muench K."/>
            <person name="Roessel N."/>
            <person name="Scherer M."/>
            <person name="Vranes M."/>
            <person name="Ladendorf O."/>
            <person name="Vincon V."/>
            <person name="Fuchs U."/>
            <person name="Sandrock B."/>
            <person name="Meng S."/>
            <person name="Ho E.C.H."/>
            <person name="Cahill M.J."/>
            <person name="Boyce K.J."/>
            <person name="Klose J."/>
            <person name="Klosterman S.J."/>
            <person name="Deelstra H.J."/>
            <person name="Ortiz-Castellanos L."/>
            <person name="Li W."/>
            <person name="Sanchez-Alonso P."/>
            <person name="Schreier P.H."/>
            <person name="Haeuser-Hahn I."/>
            <person name="Vaupel M."/>
            <person name="Koopmann E."/>
            <person name="Friedrich G."/>
            <person name="Voss H."/>
            <person name="Schlueter T."/>
            <person name="Margolis J."/>
            <person name="Platt D."/>
            <person name="Swimmer C."/>
            <person name="Gnirke A."/>
            <person name="Chen F."/>
            <person name="Vysotskaia V."/>
            <person name="Mannhaupt G."/>
            <person name="Gueldener U."/>
            <person name="Muensterkoetter M."/>
            <person name="Haase D."/>
            <person name="Oesterheld M."/>
            <person name="Mewes H.-W."/>
            <person name="Mauceli E.W."/>
            <person name="DeCaprio D."/>
            <person name="Wade C.M."/>
            <person name="Butler J."/>
            <person name="Young S.K."/>
            <person name="Jaffe D.B."/>
            <person name="Calvo S.E."/>
            <person name="Nusbaum C."/>
            <person name="Galagan J.E."/>
            <person name="Birren B.W."/>
        </authorList>
    </citation>
    <scope>NUCLEOTIDE SEQUENCE [LARGE SCALE GENOMIC DNA]</scope>
    <source>
        <strain>DSM 14603 / FGSC 9021 / UM521</strain>
    </source>
</reference>
<reference key="2">
    <citation type="submission" date="2014-09" db="EMBL/GenBank/DDBJ databases">
        <authorList>
            <person name="Gueldener U."/>
            <person name="Muensterkoetter M."/>
            <person name="Walter M.C."/>
            <person name="Mannhaupt G."/>
            <person name="Kahmann R."/>
        </authorList>
    </citation>
    <scope>GENOME REANNOTATION</scope>
    <source>
        <strain>DSM 14603 / FGSC 9021 / UM521</strain>
    </source>
</reference>
<gene>
    <name type="ORF">UMAG_04441</name>
</gene>
<proteinExistence type="inferred from homology"/>
<protein>
    <recommendedName>
        <fullName evidence="4">Very-long-chain 3-oxoacyl-CoA reductase</fullName>
        <ecNumber evidence="4">1.1.1.330</ecNumber>
    </recommendedName>
    <alternativeName>
        <fullName evidence="4">3-ketoacyl-CoA reductase</fullName>
        <shortName evidence="4">3-ketoreductase</shortName>
        <shortName evidence="4">KAR</shortName>
    </alternativeName>
    <alternativeName>
        <fullName evidence="4">Microsomal beta-keto-reductase</fullName>
    </alternativeName>
</protein>
<comment type="function">
    <text evidence="4">Component of the microsomal membrane bound fatty acid elongation system, which produces the 26-carbon very long-chain fatty acids (VLCFA) from palmitate. Catalyzes the reduction of the 3-ketoacyl-CoA intermediate that is formed in each cycle of fatty acid elongation. VLCFAs serve as precursors for ceramide and sphingolipids.</text>
</comment>
<comment type="catalytic activity">
    <reaction evidence="4">
        <text>a very-long-chain (3R)-3-hydroxyacyl-CoA + NADP(+) = a very-long-chain 3-oxoacyl-CoA + NADPH + H(+)</text>
        <dbReference type="Rhea" id="RHEA:48680"/>
        <dbReference type="ChEBI" id="CHEBI:15378"/>
        <dbReference type="ChEBI" id="CHEBI:57783"/>
        <dbReference type="ChEBI" id="CHEBI:58349"/>
        <dbReference type="ChEBI" id="CHEBI:85440"/>
        <dbReference type="ChEBI" id="CHEBI:90725"/>
        <dbReference type="EC" id="1.1.1.330"/>
    </reaction>
</comment>
<comment type="pathway">
    <text evidence="3">Lipid metabolism; fatty acid biosynthesis.</text>
</comment>
<comment type="subcellular location">
    <subcellularLocation>
        <location evidence="4">Endoplasmic reticulum membrane</location>
        <topology evidence="4">Single-pass membrane protein</topology>
    </subcellularLocation>
</comment>
<comment type="similarity">
    <text evidence="4">Belongs to the short-chain dehydrogenases/reductases (SDR) family.</text>
</comment>